<comment type="function">
    <text evidence="1">Binds the lower part of the 30S subunit head. Binds mRNA in the 70S ribosome, positioning it for translation.</text>
</comment>
<comment type="subunit">
    <text evidence="1">Part of the 30S ribosomal subunit. Forms a tight complex with proteins S10 and S14.</text>
</comment>
<comment type="similarity">
    <text evidence="1">Belongs to the universal ribosomal protein uS3 family.</text>
</comment>
<keyword id="KW-0002">3D-structure</keyword>
<keyword id="KW-1185">Reference proteome</keyword>
<keyword id="KW-0687">Ribonucleoprotein</keyword>
<keyword id="KW-0689">Ribosomal protein</keyword>
<keyword id="KW-0694">RNA-binding</keyword>
<keyword id="KW-0699">rRNA-binding</keyword>
<name>RS3_STAA8</name>
<protein>
    <recommendedName>
        <fullName evidence="1">Small ribosomal subunit protein uS3</fullName>
    </recommendedName>
    <alternativeName>
        <fullName evidence="2">30S ribosomal protein S3</fullName>
    </alternativeName>
</protein>
<dbReference type="EMBL" id="CP000253">
    <property type="protein sequence ID" value="ABD31524.1"/>
    <property type="molecule type" value="Genomic_DNA"/>
</dbReference>
<dbReference type="RefSeq" id="WP_000529877.1">
    <property type="nucleotide sequence ID" value="NZ_LS483365.1"/>
</dbReference>
<dbReference type="RefSeq" id="YP_500973.1">
    <property type="nucleotide sequence ID" value="NC_007795.1"/>
</dbReference>
<dbReference type="PDB" id="5LI0">
    <property type="method" value="EM"/>
    <property type="resolution" value="3.80 A"/>
    <property type="chains" value="c=1-217"/>
</dbReference>
<dbReference type="PDB" id="5ND8">
    <property type="method" value="EM"/>
    <property type="resolution" value="3.70 A"/>
    <property type="chains" value="c=1-217"/>
</dbReference>
<dbReference type="PDB" id="5ND9">
    <property type="method" value="EM"/>
    <property type="resolution" value="3.70 A"/>
    <property type="chains" value="c=1-217"/>
</dbReference>
<dbReference type="PDB" id="5TCU">
    <property type="method" value="EM"/>
    <property type="resolution" value="3.90 A"/>
    <property type="chains" value="SB=2-203"/>
</dbReference>
<dbReference type="PDB" id="6YEF">
    <property type="method" value="EM"/>
    <property type="resolution" value="3.20 A"/>
    <property type="chains" value="c=1-217"/>
</dbReference>
<dbReference type="PDB" id="7BGE">
    <property type="method" value="EM"/>
    <property type="resolution" value="3.60 A"/>
    <property type="chains" value="c=1-217"/>
</dbReference>
<dbReference type="PDB" id="7KWG">
    <property type="method" value="EM"/>
    <property type="resolution" value="3.75 A"/>
    <property type="chains" value="c=1-217"/>
</dbReference>
<dbReference type="PDB" id="7NHL">
    <property type="method" value="EM"/>
    <property type="resolution" value="3.10 A"/>
    <property type="chains" value="d=1-217"/>
</dbReference>
<dbReference type="PDB" id="7NHM">
    <property type="method" value="EM"/>
    <property type="resolution" value="3.10 A"/>
    <property type="chains" value="d=1-217"/>
</dbReference>
<dbReference type="PDB" id="8BH6">
    <property type="method" value="EM"/>
    <property type="resolution" value="3.70 A"/>
    <property type="chains" value="c=1-217"/>
</dbReference>
<dbReference type="PDB" id="8BH7">
    <property type="method" value="EM"/>
    <property type="resolution" value="4.23 A"/>
    <property type="chains" value="c=1-217"/>
</dbReference>
<dbReference type="PDB" id="8BYV">
    <property type="method" value="EM"/>
    <property type="resolution" value="2.89 A"/>
    <property type="chains" value="c=1-217"/>
</dbReference>
<dbReference type="PDB" id="8P2F">
    <property type="method" value="EM"/>
    <property type="resolution" value="2.44 A"/>
    <property type="chains" value="d=1-217"/>
</dbReference>
<dbReference type="PDB" id="8P2G">
    <property type="method" value="EM"/>
    <property type="resolution" value="2.02 A"/>
    <property type="chains" value="d=1-217"/>
</dbReference>
<dbReference type="PDB" id="8P2H">
    <property type="method" value="EM"/>
    <property type="resolution" value="2.49 A"/>
    <property type="chains" value="d=1-217"/>
</dbReference>
<dbReference type="PDBsum" id="5LI0"/>
<dbReference type="PDBsum" id="5ND8"/>
<dbReference type="PDBsum" id="5ND9"/>
<dbReference type="PDBsum" id="5TCU"/>
<dbReference type="PDBsum" id="6YEF"/>
<dbReference type="PDBsum" id="7BGE"/>
<dbReference type="PDBsum" id="7KWG"/>
<dbReference type="PDBsum" id="7NHL"/>
<dbReference type="PDBsum" id="7NHM"/>
<dbReference type="PDBsum" id="8BH6"/>
<dbReference type="PDBsum" id="8BH7"/>
<dbReference type="PDBsum" id="8BYV"/>
<dbReference type="PDBsum" id="8P2F"/>
<dbReference type="PDBsum" id="8P2G"/>
<dbReference type="PDBsum" id="8P2H"/>
<dbReference type="EMDB" id="EMD-10791"/>
<dbReference type="EMDB" id="EMD-12179"/>
<dbReference type="EMDB" id="EMD-12332"/>
<dbReference type="EMDB" id="EMD-12333"/>
<dbReference type="EMDB" id="EMD-16048"/>
<dbReference type="EMDB" id="EMD-16049"/>
<dbReference type="EMDB" id="EMD-16334"/>
<dbReference type="EMDB" id="EMD-17363"/>
<dbReference type="EMDB" id="EMD-17364"/>
<dbReference type="EMDB" id="EMD-17365"/>
<dbReference type="EMDB" id="EMD-23052"/>
<dbReference type="EMDB" id="EMD-3624"/>
<dbReference type="EMDB" id="EMD-3625"/>
<dbReference type="EMDB" id="EMD-4050"/>
<dbReference type="EMDB" id="EMD-8402"/>
<dbReference type="SMR" id="Q2FW12"/>
<dbReference type="IntAct" id="Q2FW12">
    <property type="interactions" value="1"/>
</dbReference>
<dbReference type="STRING" id="93061.SAOUHSC_02506"/>
<dbReference type="PaxDb" id="1280-SAXN108_2493"/>
<dbReference type="GeneID" id="3920882"/>
<dbReference type="GeneID" id="98346556"/>
<dbReference type="KEGG" id="sao:SAOUHSC_02506"/>
<dbReference type="PATRIC" id="fig|93061.5.peg.2261"/>
<dbReference type="eggNOG" id="COG0092">
    <property type="taxonomic scope" value="Bacteria"/>
</dbReference>
<dbReference type="HOGENOM" id="CLU_058591_0_2_9"/>
<dbReference type="OrthoDB" id="9806396at2"/>
<dbReference type="PRO" id="PR:Q2FW12"/>
<dbReference type="Proteomes" id="UP000008816">
    <property type="component" value="Chromosome"/>
</dbReference>
<dbReference type="GO" id="GO:0022627">
    <property type="term" value="C:cytosolic small ribosomal subunit"/>
    <property type="evidence" value="ECO:0000318"/>
    <property type="project" value="GO_Central"/>
</dbReference>
<dbReference type="GO" id="GO:0003729">
    <property type="term" value="F:mRNA binding"/>
    <property type="evidence" value="ECO:0007669"/>
    <property type="project" value="UniProtKB-UniRule"/>
</dbReference>
<dbReference type="GO" id="GO:0019843">
    <property type="term" value="F:rRNA binding"/>
    <property type="evidence" value="ECO:0007669"/>
    <property type="project" value="UniProtKB-UniRule"/>
</dbReference>
<dbReference type="GO" id="GO:0003735">
    <property type="term" value="F:structural constituent of ribosome"/>
    <property type="evidence" value="ECO:0000318"/>
    <property type="project" value="GO_Central"/>
</dbReference>
<dbReference type="GO" id="GO:0006412">
    <property type="term" value="P:translation"/>
    <property type="evidence" value="ECO:0007669"/>
    <property type="project" value="UniProtKB-UniRule"/>
</dbReference>
<dbReference type="CDD" id="cd02412">
    <property type="entry name" value="KH-II_30S_S3"/>
    <property type="match status" value="1"/>
</dbReference>
<dbReference type="FunFam" id="3.30.1140.32:FF:000001">
    <property type="entry name" value="30S ribosomal protein S3"/>
    <property type="match status" value="1"/>
</dbReference>
<dbReference type="FunFam" id="3.30.300.20:FF:000001">
    <property type="entry name" value="30S ribosomal protein S3"/>
    <property type="match status" value="1"/>
</dbReference>
<dbReference type="Gene3D" id="3.30.300.20">
    <property type="match status" value="1"/>
</dbReference>
<dbReference type="Gene3D" id="3.30.1140.32">
    <property type="entry name" value="Ribosomal protein S3, C-terminal domain"/>
    <property type="match status" value="1"/>
</dbReference>
<dbReference type="HAMAP" id="MF_01309_B">
    <property type="entry name" value="Ribosomal_uS3_B"/>
    <property type="match status" value="1"/>
</dbReference>
<dbReference type="InterPro" id="IPR004087">
    <property type="entry name" value="KH_dom"/>
</dbReference>
<dbReference type="InterPro" id="IPR015946">
    <property type="entry name" value="KH_dom-like_a/b"/>
</dbReference>
<dbReference type="InterPro" id="IPR004044">
    <property type="entry name" value="KH_dom_type_2"/>
</dbReference>
<dbReference type="InterPro" id="IPR009019">
    <property type="entry name" value="KH_sf_prok-type"/>
</dbReference>
<dbReference type="InterPro" id="IPR036419">
    <property type="entry name" value="Ribosomal_S3_C_sf"/>
</dbReference>
<dbReference type="InterPro" id="IPR005704">
    <property type="entry name" value="Ribosomal_uS3_bac-typ"/>
</dbReference>
<dbReference type="InterPro" id="IPR001351">
    <property type="entry name" value="Ribosomal_uS3_C"/>
</dbReference>
<dbReference type="InterPro" id="IPR018280">
    <property type="entry name" value="Ribosomal_uS3_CS"/>
</dbReference>
<dbReference type="NCBIfam" id="TIGR01009">
    <property type="entry name" value="rpsC_bact"/>
    <property type="match status" value="1"/>
</dbReference>
<dbReference type="PANTHER" id="PTHR11760">
    <property type="entry name" value="30S/40S RIBOSOMAL PROTEIN S3"/>
    <property type="match status" value="1"/>
</dbReference>
<dbReference type="PANTHER" id="PTHR11760:SF19">
    <property type="entry name" value="SMALL RIBOSOMAL SUBUNIT PROTEIN US3C"/>
    <property type="match status" value="1"/>
</dbReference>
<dbReference type="Pfam" id="PF07650">
    <property type="entry name" value="KH_2"/>
    <property type="match status" value="1"/>
</dbReference>
<dbReference type="Pfam" id="PF00189">
    <property type="entry name" value="Ribosomal_S3_C"/>
    <property type="match status" value="1"/>
</dbReference>
<dbReference type="SMART" id="SM00322">
    <property type="entry name" value="KH"/>
    <property type="match status" value="1"/>
</dbReference>
<dbReference type="SUPFAM" id="SSF54814">
    <property type="entry name" value="Prokaryotic type KH domain (KH-domain type II)"/>
    <property type="match status" value="1"/>
</dbReference>
<dbReference type="SUPFAM" id="SSF54821">
    <property type="entry name" value="Ribosomal protein S3 C-terminal domain"/>
    <property type="match status" value="1"/>
</dbReference>
<dbReference type="PROSITE" id="PS50823">
    <property type="entry name" value="KH_TYPE_2"/>
    <property type="match status" value="1"/>
</dbReference>
<dbReference type="PROSITE" id="PS00548">
    <property type="entry name" value="RIBOSOMAL_S3"/>
    <property type="match status" value="1"/>
</dbReference>
<accession>Q2FW12</accession>
<reference key="1">
    <citation type="book" date="2006" name="Gram positive pathogens, 2nd edition">
        <title>The Staphylococcus aureus NCTC 8325 genome.</title>
        <editorList>
            <person name="Fischetti V."/>
            <person name="Novick R."/>
            <person name="Ferretti J."/>
            <person name="Portnoy D."/>
            <person name="Rood J."/>
        </editorList>
        <authorList>
            <person name="Gillaspy A.F."/>
            <person name="Worrell V."/>
            <person name="Orvis J."/>
            <person name="Roe B.A."/>
            <person name="Dyer D.W."/>
            <person name="Iandolo J.J."/>
        </authorList>
    </citation>
    <scope>NUCLEOTIDE SEQUENCE [LARGE SCALE GENOMIC DNA]</scope>
    <source>
        <strain>NCTC 8325 / PS 47</strain>
    </source>
</reference>
<sequence length="217" mass="24100">MGQKINPIGLRVGIIRDWEAKWYAEKDFASLLHEDLKIRKFIDNELKEASVSHVEIERAANRINIAIHTGKPGMVIGKGGSEIEKLRNKLNALTDKKVHINVIEIKKVDLDARLVAENIARQLENRASFRRVQKQAITRAMKLGAKGIKTQVSGRLGGADIARAEQYSEGTVPLHTLRADIDYAHAEADTTYGKLGVKVWIYRGEVLPTKNTSGGGK</sequence>
<proteinExistence type="evidence at protein level"/>
<evidence type="ECO:0000255" key="1">
    <source>
        <dbReference type="HAMAP-Rule" id="MF_01309"/>
    </source>
</evidence>
<evidence type="ECO:0000305" key="2"/>
<evidence type="ECO:0007829" key="3">
    <source>
        <dbReference type="PDB" id="8BYV"/>
    </source>
</evidence>
<organism>
    <name type="scientific">Staphylococcus aureus (strain NCTC 8325 / PS 47)</name>
    <dbReference type="NCBI Taxonomy" id="93061"/>
    <lineage>
        <taxon>Bacteria</taxon>
        <taxon>Bacillati</taxon>
        <taxon>Bacillota</taxon>
        <taxon>Bacilli</taxon>
        <taxon>Bacillales</taxon>
        <taxon>Staphylococcaceae</taxon>
        <taxon>Staphylococcus</taxon>
    </lineage>
</organism>
<feature type="chain" id="PRO_0000293891" description="Small ribosomal subunit protein uS3">
    <location>
        <begin position="1"/>
        <end position="217"/>
    </location>
</feature>
<feature type="domain" description="KH type-2" evidence="1">
    <location>
        <begin position="38"/>
        <end position="106"/>
    </location>
</feature>
<feature type="helix" evidence="3">
    <location>
        <begin position="7"/>
        <end position="11"/>
    </location>
</feature>
<feature type="turn" evidence="3">
    <location>
        <begin position="12"/>
        <end position="14"/>
    </location>
</feature>
<feature type="helix" evidence="3">
    <location>
        <begin position="28"/>
        <end position="41"/>
    </location>
</feature>
<feature type="helix" evidence="3">
    <location>
        <begin position="43"/>
        <end position="49"/>
    </location>
</feature>
<feature type="strand" evidence="3">
    <location>
        <begin position="54"/>
        <end position="58"/>
    </location>
</feature>
<feature type="strand" evidence="3">
    <location>
        <begin position="63"/>
        <end position="70"/>
    </location>
</feature>
<feature type="helix" evidence="3">
    <location>
        <begin position="72"/>
        <end position="75"/>
    </location>
</feature>
<feature type="strand" evidence="3">
    <location>
        <begin position="78"/>
        <end position="82"/>
    </location>
</feature>
<feature type="helix" evidence="3">
    <location>
        <begin position="83"/>
        <end position="94"/>
    </location>
</feature>
<feature type="helix" evidence="3">
    <location>
        <begin position="113"/>
        <end position="124"/>
    </location>
</feature>
<feature type="helix" evidence="3">
    <location>
        <begin position="129"/>
        <end position="143"/>
    </location>
</feature>
<feature type="strand" evidence="3">
    <location>
        <begin position="146"/>
        <end position="155"/>
    </location>
</feature>
<feature type="strand" evidence="3">
    <location>
        <begin position="163"/>
        <end position="167"/>
    </location>
</feature>
<feature type="strand" evidence="3">
    <location>
        <begin position="181"/>
        <end position="183"/>
    </location>
</feature>
<feature type="strand" evidence="3">
    <location>
        <begin position="186"/>
        <end position="188"/>
    </location>
</feature>
<feature type="strand" evidence="3">
    <location>
        <begin position="190"/>
        <end position="193"/>
    </location>
</feature>
<feature type="strand" evidence="3">
    <location>
        <begin position="195"/>
        <end position="202"/>
    </location>
</feature>
<gene>
    <name evidence="1" type="primary">rpsC</name>
    <name type="ordered locus">SAOUHSC_02506</name>
</gene>